<dbReference type="EC" id="2.4.1.306" evidence="1"/>
<dbReference type="EMBL" id="AY493508">
    <property type="protein sequence ID" value="AAR90884.1"/>
    <property type="molecule type" value="Genomic_DNA"/>
</dbReference>
<dbReference type="RefSeq" id="WP_000799972.1">
    <property type="nucleotide sequence ID" value="NZ_WSXE01000068.1"/>
</dbReference>
<dbReference type="SMR" id="P0DMP7"/>
<dbReference type="CAZy" id="GT4">
    <property type="family name" value="Glycosyltransferase Family 4"/>
</dbReference>
<dbReference type="UniPathway" id="UPA00281"/>
<dbReference type="GO" id="GO:0016757">
    <property type="term" value="F:glycosyltransferase activity"/>
    <property type="evidence" value="ECO:0007669"/>
    <property type="project" value="UniProtKB-KW"/>
</dbReference>
<dbReference type="GO" id="GO:0009243">
    <property type="term" value="P:O antigen biosynthetic process"/>
    <property type="evidence" value="ECO:0007669"/>
    <property type="project" value="UniProtKB-UniPathway"/>
</dbReference>
<dbReference type="CDD" id="cd03808">
    <property type="entry name" value="GT4_CapM-like"/>
    <property type="match status" value="1"/>
</dbReference>
<dbReference type="Gene3D" id="3.40.50.2000">
    <property type="entry name" value="Glycogen Phosphorylase B"/>
    <property type="match status" value="2"/>
</dbReference>
<dbReference type="InterPro" id="IPR001296">
    <property type="entry name" value="Glyco_trans_1"/>
</dbReference>
<dbReference type="InterPro" id="IPR028098">
    <property type="entry name" value="Glyco_trans_4-like_N"/>
</dbReference>
<dbReference type="PANTHER" id="PTHR12526">
    <property type="entry name" value="GLYCOSYLTRANSFERASE"/>
    <property type="match status" value="1"/>
</dbReference>
<dbReference type="Pfam" id="PF13439">
    <property type="entry name" value="Glyco_transf_4"/>
    <property type="match status" value="1"/>
</dbReference>
<dbReference type="Pfam" id="PF00534">
    <property type="entry name" value="Glycos_transf_1"/>
    <property type="match status" value="1"/>
</dbReference>
<dbReference type="SUPFAM" id="SSF53756">
    <property type="entry name" value="UDP-Glycosyltransferase/glycogen phosphorylase"/>
    <property type="match status" value="1"/>
</dbReference>
<reference key="1">
    <citation type="submission" date="2003-12" db="EMBL/GenBank/DDBJ databases">
        <title>Sequence and characterization of Escherichia coli O127 antigen biosynthesis gene cluster.</title>
        <authorList>
            <person name="Yi W."/>
            <person name="Shao J."/>
            <person name="Wang P.G."/>
        </authorList>
    </citation>
    <scope>NUCLEOTIDE SEQUENCE [GENOMIC DNA]</scope>
    <source>
        <strain>O127:K63 /B8</strain>
    </source>
</reference>
<name>WBIN_ECOLX</name>
<organism>
    <name type="scientific">Escherichia coli</name>
    <dbReference type="NCBI Taxonomy" id="562"/>
    <lineage>
        <taxon>Bacteria</taxon>
        <taxon>Pseudomonadati</taxon>
        <taxon>Pseudomonadota</taxon>
        <taxon>Gammaproteobacteria</taxon>
        <taxon>Enterobacterales</taxon>
        <taxon>Enterobacteriaceae</taxon>
        <taxon>Escherichia</taxon>
    </lineage>
</organism>
<comment type="function">
    <text evidence="1">Involved in the assembly of the O-repeating unit during O-antigen biosynthesis.</text>
</comment>
<comment type="catalytic activity">
    <reaction evidence="1">
        <text>N-acetyl-alpha-D-galactosaminyl-di-trans,octa-cis-undecaprenyl diphosphate + UDP-N-acetyl-alpha-D-galactosamine = alpha-D-GalNAc-(1-&gt;3)-alpha-D-GalNAc-di-trans,octa-cis-undecaprenyl diphosphate + UDP + H(+)</text>
        <dbReference type="Rhea" id="RHEA:36759"/>
        <dbReference type="ChEBI" id="CHEBI:15378"/>
        <dbReference type="ChEBI" id="CHEBI:58223"/>
        <dbReference type="ChEBI" id="CHEBI:67138"/>
        <dbReference type="ChEBI" id="CHEBI:73987"/>
        <dbReference type="ChEBI" id="CHEBI:74214"/>
        <dbReference type="EC" id="2.4.1.306"/>
    </reaction>
</comment>
<comment type="pathway">
    <text evidence="1">Bacterial outer membrane biogenesis; LPS O-antigen biosynthesis.</text>
</comment>
<comment type="similarity">
    <text evidence="2">Belongs to the glycosyltransferase group 1 family. Glycosyltransferase 4 subfamily.</text>
</comment>
<accession>P0DMP7</accession>
<accession>Q5J7D6</accession>
<keyword id="KW-0328">Glycosyltransferase</keyword>
<keyword id="KW-0448">Lipopolysaccharide biosynthesis</keyword>
<keyword id="KW-0808">Transferase</keyword>
<protein>
    <recommendedName>
        <fullName evidence="1">Probable O-antigen biosynthesis glycosyltransferase WbiN</fullName>
        <ecNumber evidence="1">2.4.1.306</ecNumber>
    </recommendedName>
    <alternativeName>
        <fullName evidence="1">UDP-GalNAc:alpha-D-GalNAc-diphosphoundecaprenol alpha-1,3-N-acetylgalactosaminyltransferase</fullName>
    </alternativeName>
</protein>
<evidence type="ECO:0000250" key="1">
    <source>
        <dbReference type="UniProtKB" id="P0DMP6"/>
    </source>
</evidence>
<evidence type="ECO:0000305" key="2"/>
<evidence type="ECO:0000312" key="3">
    <source>
        <dbReference type="EMBL" id="AAR90884.1"/>
    </source>
</evidence>
<gene>
    <name evidence="3" type="primary">wbiN</name>
</gene>
<sequence length="338" mass="38148">MKNVGFIVTKSEIGGAQTWVNEISNLIKEECNIFLITSEEGWLTHKDVFAGVFVIPGIKKYFDFLTLFKLRKILKENNISTLIASSANAGVYARLVRLLVDFKCIYVSHGWSCLYNGGRLKSIFCIVEKYLSLLTDVIWCVSKSDEKKAIENIGIKEPKIITVSNSVPQMPRCNNKQLQYKVLFVGRLTHPKRPELLANVISKKPQYSLHIVGGGERLESLKKQFSECENIHFLGEVNNFYNYHEYDLFSLISDSEGLPMSGLEAHTAAIPLLLSDVGGCFELIEGNGLLVENTEDDIGYKLDKIFDDYENYREQAIRASGKFVIENYASAYKSIILG</sequence>
<feature type="chain" id="PRO_0000430648" description="Probable O-antigen biosynthesis glycosyltransferase WbiN">
    <location>
        <begin position="1"/>
        <end position="338"/>
    </location>
</feature>
<proteinExistence type="inferred from homology"/>